<feature type="chain" id="PRO_0000381874" description="Polyribonucleotide nucleotidyltransferase">
    <location>
        <begin position="1"/>
        <end position="755"/>
    </location>
</feature>
<feature type="domain" description="KH" evidence="1">
    <location>
        <begin position="560"/>
        <end position="619"/>
    </location>
</feature>
<feature type="domain" description="S1 motif" evidence="1">
    <location>
        <begin position="629"/>
        <end position="698"/>
    </location>
</feature>
<feature type="region of interest" description="Disordered" evidence="2">
    <location>
        <begin position="704"/>
        <end position="755"/>
    </location>
</feature>
<feature type="compositionally biased region" description="Basic and acidic residues" evidence="2">
    <location>
        <begin position="719"/>
        <end position="755"/>
    </location>
</feature>
<feature type="binding site" evidence="1">
    <location>
        <position position="493"/>
    </location>
    <ligand>
        <name>Mg(2+)</name>
        <dbReference type="ChEBI" id="CHEBI:18420"/>
    </ligand>
</feature>
<feature type="binding site" evidence="1">
    <location>
        <position position="499"/>
    </location>
    <ligand>
        <name>Mg(2+)</name>
        <dbReference type="ChEBI" id="CHEBI:18420"/>
    </ligand>
</feature>
<evidence type="ECO:0000255" key="1">
    <source>
        <dbReference type="HAMAP-Rule" id="MF_01595"/>
    </source>
</evidence>
<evidence type="ECO:0000256" key="2">
    <source>
        <dbReference type="SAM" id="MobiDB-lite"/>
    </source>
</evidence>
<gene>
    <name evidence="1" type="primary">pnp</name>
    <name type="ordered locus">Cagg_2522</name>
</gene>
<organism>
    <name type="scientific">Chloroflexus aggregans (strain MD-66 / DSM 9485)</name>
    <dbReference type="NCBI Taxonomy" id="326427"/>
    <lineage>
        <taxon>Bacteria</taxon>
        <taxon>Bacillati</taxon>
        <taxon>Chloroflexota</taxon>
        <taxon>Chloroflexia</taxon>
        <taxon>Chloroflexales</taxon>
        <taxon>Chloroflexineae</taxon>
        <taxon>Chloroflexaceae</taxon>
        <taxon>Chloroflexus</taxon>
    </lineage>
</organism>
<comment type="function">
    <text evidence="1">Involved in mRNA degradation. Catalyzes the phosphorolysis of single-stranded polyribonucleotides processively in the 3'- to 5'-direction.</text>
</comment>
<comment type="catalytic activity">
    <reaction evidence="1">
        <text>RNA(n+1) + phosphate = RNA(n) + a ribonucleoside 5'-diphosphate</text>
        <dbReference type="Rhea" id="RHEA:22096"/>
        <dbReference type="Rhea" id="RHEA-COMP:14527"/>
        <dbReference type="Rhea" id="RHEA-COMP:17342"/>
        <dbReference type="ChEBI" id="CHEBI:43474"/>
        <dbReference type="ChEBI" id="CHEBI:57930"/>
        <dbReference type="ChEBI" id="CHEBI:140395"/>
        <dbReference type="EC" id="2.7.7.8"/>
    </reaction>
</comment>
<comment type="cofactor">
    <cofactor evidence="1">
        <name>Mg(2+)</name>
        <dbReference type="ChEBI" id="CHEBI:18420"/>
    </cofactor>
</comment>
<comment type="subcellular location">
    <subcellularLocation>
        <location evidence="1">Cytoplasm</location>
    </subcellularLocation>
</comment>
<comment type="similarity">
    <text evidence="1">Belongs to the polyribonucleotide nucleotidyltransferase family.</text>
</comment>
<sequence length="755" mass="82364">MTERQIYTVSAEIAGRTLTLEAGRFAEQADGAVVARYGDTMLLATVVCAKEAREGTDFFPLTVDYEEKMYAVGKIPANFFKREGRPTTTAILISRLTDRPLRPLFPKGFYNEVQVIITTFSIDMENDPGPLAIIAASAALAISDIPFAGPVGAVQMGHLDGKLVVNPKMGEIEKSRLDLVVAGTKDAVLMVEAGAYELSEDEMLQAVIEGHAVCKQICELQEQLVQLCGKPKRPFTPPVVDTSLEEAISAWMGDRLRKAVRSPVKQEREAQTEALKAEVIAHFTADEPEEEIPNRTKEVSKAFEKLLKDEVRNAILDEGIRVDGRALDEIRPISIEVGVVPRVHGSALFTRGQTQVLTIATLGSPGDEQKVDDLGIETTKRYIHHYNFPPFSTGEIRRLGTPRRRDIGHGALAERSLYAVLPSEEEFPYTIRLVSEVLSSNGSSSMASVCGSSLSLMDAGVPIKAPVAGVAMGLITGEDGRWRVLTDIQGIEDALGDMDFKVAGTANGVTGLQMDIKTTGITYEIMRQAFAQARAGRLFILEKMNAVISAPRPELSIYAPRIMTIQIPVDKIGALIGPGGKTIRNICDTTGAQIDIEDDGRVFITAPDGEAAKKAISMIEGLTREAKVGDIFLGKVVSIKPFGAFVNILPGKDGMVHVSELDEKRVENVEDVVSLGDEINVMVIDIDRNTGKISLSRRAVLTGETPEARKAAGAAPRPRPREEQRGGREEPRSLREELRGPRRDGERPRPRRRDD</sequence>
<keyword id="KW-0963">Cytoplasm</keyword>
<keyword id="KW-0460">Magnesium</keyword>
<keyword id="KW-0479">Metal-binding</keyword>
<keyword id="KW-0548">Nucleotidyltransferase</keyword>
<keyword id="KW-0694">RNA-binding</keyword>
<keyword id="KW-0808">Transferase</keyword>
<dbReference type="EC" id="2.7.7.8" evidence="1"/>
<dbReference type="EMBL" id="CP001337">
    <property type="protein sequence ID" value="ACL25393.1"/>
    <property type="molecule type" value="Genomic_DNA"/>
</dbReference>
<dbReference type="RefSeq" id="WP_015941251.1">
    <property type="nucleotide sequence ID" value="NC_011831.1"/>
</dbReference>
<dbReference type="SMR" id="B8G3Z1"/>
<dbReference type="STRING" id="326427.Cagg_2522"/>
<dbReference type="KEGG" id="cag:Cagg_2522"/>
<dbReference type="eggNOG" id="COG1185">
    <property type="taxonomic scope" value="Bacteria"/>
</dbReference>
<dbReference type="HOGENOM" id="CLU_004217_2_2_0"/>
<dbReference type="OrthoDB" id="9804305at2"/>
<dbReference type="Proteomes" id="UP000002508">
    <property type="component" value="Chromosome"/>
</dbReference>
<dbReference type="GO" id="GO:0005829">
    <property type="term" value="C:cytosol"/>
    <property type="evidence" value="ECO:0007669"/>
    <property type="project" value="TreeGrafter"/>
</dbReference>
<dbReference type="GO" id="GO:0000175">
    <property type="term" value="F:3'-5'-RNA exonuclease activity"/>
    <property type="evidence" value="ECO:0007669"/>
    <property type="project" value="TreeGrafter"/>
</dbReference>
<dbReference type="GO" id="GO:0000287">
    <property type="term" value="F:magnesium ion binding"/>
    <property type="evidence" value="ECO:0007669"/>
    <property type="project" value="UniProtKB-UniRule"/>
</dbReference>
<dbReference type="GO" id="GO:0004654">
    <property type="term" value="F:polyribonucleotide nucleotidyltransferase activity"/>
    <property type="evidence" value="ECO:0007669"/>
    <property type="project" value="UniProtKB-UniRule"/>
</dbReference>
<dbReference type="GO" id="GO:0003723">
    <property type="term" value="F:RNA binding"/>
    <property type="evidence" value="ECO:0007669"/>
    <property type="project" value="UniProtKB-UniRule"/>
</dbReference>
<dbReference type="GO" id="GO:0006402">
    <property type="term" value="P:mRNA catabolic process"/>
    <property type="evidence" value="ECO:0007669"/>
    <property type="project" value="UniProtKB-UniRule"/>
</dbReference>
<dbReference type="GO" id="GO:0006396">
    <property type="term" value="P:RNA processing"/>
    <property type="evidence" value="ECO:0007669"/>
    <property type="project" value="InterPro"/>
</dbReference>
<dbReference type="CDD" id="cd02393">
    <property type="entry name" value="KH-I_PNPase"/>
    <property type="match status" value="1"/>
</dbReference>
<dbReference type="CDD" id="cd11363">
    <property type="entry name" value="RNase_PH_PNPase_1"/>
    <property type="match status" value="1"/>
</dbReference>
<dbReference type="CDD" id="cd11364">
    <property type="entry name" value="RNase_PH_PNPase_2"/>
    <property type="match status" value="1"/>
</dbReference>
<dbReference type="CDD" id="cd04472">
    <property type="entry name" value="S1_PNPase"/>
    <property type="match status" value="1"/>
</dbReference>
<dbReference type="FunFam" id="3.30.1370.10:FF:000001">
    <property type="entry name" value="Polyribonucleotide nucleotidyltransferase"/>
    <property type="match status" value="1"/>
</dbReference>
<dbReference type="FunFam" id="3.30.230.70:FF:000001">
    <property type="entry name" value="Polyribonucleotide nucleotidyltransferase"/>
    <property type="match status" value="1"/>
</dbReference>
<dbReference type="FunFam" id="3.30.230.70:FF:000002">
    <property type="entry name" value="Polyribonucleotide nucleotidyltransferase"/>
    <property type="match status" value="1"/>
</dbReference>
<dbReference type="FunFam" id="2.40.50.140:FF:000189">
    <property type="entry name" value="Polyribonucleotide nucleotidyltransferase, putative"/>
    <property type="match status" value="1"/>
</dbReference>
<dbReference type="Gene3D" id="3.30.230.70">
    <property type="entry name" value="GHMP Kinase, N-terminal domain"/>
    <property type="match status" value="2"/>
</dbReference>
<dbReference type="Gene3D" id="3.30.1370.10">
    <property type="entry name" value="K Homology domain, type 1"/>
    <property type="match status" value="1"/>
</dbReference>
<dbReference type="Gene3D" id="2.40.50.140">
    <property type="entry name" value="Nucleic acid-binding proteins"/>
    <property type="match status" value="1"/>
</dbReference>
<dbReference type="HAMAP" id="MF_01595">
    <property type="entry name" value="PNPase"/>
    <property type="match status" value="1"/>
</dbReference>
<dbReference type="InterPro" id="IPR001247">
    <property type="entry name" value="ExoRNase_PH_dom1"/>
</dbReference>
<dbReference type="InterPro" id="IPR015847">
    <property type="entry name" value="ExoRNase_PH_dom2"/>
</dbReference>
<dbReference type="InterPro" id="IPR036345">
    <property type="entry name" value="ExoRNase_PH_dom2_sf"/>
</dbReference>
<dbReference type="InterPro" id="IPR004087">
    <property type="entry name" value="KH_dom"/>
</dbReference>
<dbReference type="InterPro" id="IPR004088">
    <property type="entry name" value="KH_dom_type_1"/>
</dbReference>
<dbReference type="InterPro" id="IPR036612">
    <property type="entry name" value="KH_dom_type_1_sf"/>
</dbReference>
<dbReference type="InterPro" id="IPR012340">
    <property type="entry name" value="NA-bd_OB-fold"/>
</dbReference>
<dbReference type="InterPro" id="IPR012162">
    <property type="entry name" value="PNPase"/>
</dbReference>
<dbReference type="InterPro" id="IPR027408">
    <property type="entry name" value="PNPase/RNase_PH_dom_sf"/>
</dbReference>
<dbReference type="InterPro" id="IPR015848">
    <property type="entry name" value="PNPase_PH_RNA-bd_bac/org-type"/>
</dbReference>
<dbReference type="InterPro" id="IPR036456">
    <property type="entry name" value="PNPase_PH_RNA-bd_sf"/>
</dbReference>
<dbReference type="InterPro" id="IPR020568">
    <property type="entry name" value="Ribosomal_Su5_D2-typ_SF"/>
</dbReference>
<dbReference type="InterPro" id="IPR003029">
    <property type="entry name" value="S1_domain"/>
</dbReference>
<dbReference type="NCBIfam" id="TIGR03591">
    <property type="entry name" value="polynuc_phos"/>
    <property type="match status" value="1"/>
</dbReference>
<dbReference type="NCBIfam" id="NF008805">
    <property type="entry name" value="PRK11824.1"/>
    <property type="match status" value="1"/>
</dbReference>
<dbReference type="PANTHER" id="PTHR11252">
    <property type="entry name" value="POLYRIBONUCLEOTIDE NUCLEOTIDYLTRANSFERASE"/>
    <property type="match status" value="1"/>
</dbReference>
<dbReference type="PANTHER" id="PTHR11252:SF0">
    <property type="entry name" value="POLYRIBONUCLEOTIDE NUCLEOTIDYLTRANSFERASE 1, MITOCHONDRIAL"/>
    <property type="match status" value="1"/>
</dbReference>
<dbReference type="Pfam" id="PF00013">
    <property type="entry name" value="KH_1"/>
    <property type="match status" value="1"/>
</dbReference>
<dbReference type="Pfam" id="PF03726">
    <property type="entry name" value="PNPase"/>
    <property type="match status" value="1"/>
</dbReference>
<dbReference type="Pfam" id="PF01138">
    <property type="entry name" value="RNase_PH"/>
    <property type="match status" value="2"/>
</dbReference>
<dbReference type="Pfam" id="PF03725">
    <property type="entry name" value="RNase_PH_C"/>
    <property type="match status" value="2"/>
</dbReference>
<dbReference type="Pfam" id="PF00575">
    <property type="entry name" value="S1"/>
    <property type="match status" value="1"/>
</dbReference>
<dbReference type="PIRSF" id="PIRSF005499">
    <property type="entry name" value="PNPase"/>
    <property type="match status" value="1"/>
</dbReference>
<dbReference type="SMART" id="SM00322">
    <property type="entry name" value="KH"/>
    <property type="match status" value="1"/>
</dbReference>
<dbReference type="SMART" id="SM00316">
    <property type="entry name" value="S1"/>
    <property type="match status" value="1"/>
</dbReference>
<dbReference type="SUPFAM" id="SSF54791">
    <property type="entry name" value="Eukaryotic type KH-domain (KH-domain type I)"/>
    <property type="match status" value="1"/>
</dbReference>
<dbReference type="SUPFAM" id="SSF50249">
    <property type="entry name" value="Nucleic acid-binding proteins"/>
    <property type="match status" value="1"/>
</dbReference>
<dbReference type="SUPFAM" id="SSF46915">
    <property type="entry name" value="Polynucleotide phosphorylase/guanosine pentaphosphate synthase (PNPase/GPSI), domain 3"/>
    <property type="match status" value="1"/>
</dbReference>
<dbReference type="SUPFAM" id="SSF55666">
    <property type="entry name" value="Ribonuclease PH domain 2-like"/>
    <property type="match status" value="2"/>
</dbReference>
<dbReference type="SUPFAM" id="SSF54211">
    <property type="entry name" value="Ribosomal protein S5 domain 2-like"/>
    <property type="match status" value="2"/>
</dbReference>
<dbReference type="PROSITE" id="PS50084">
    <property type="entry name" value="KH_TYPE_1"/>
    <property type="match status" value="1"/>
</dbReference>
<dbReference type="PROSITE" id="PS50126">
    <property type="entry name" value="S1"/>
    <property type="match status" value="1"/>
</dbReference>
<reference key="1">
    <citation type="submission" date="2008-12" db="EMBL/GenBank/DDBJ databases">
        <title>Complete sequence of Chloroflexus aggregans DSM 9485.</title>
        <authorList>
            <consortium name="US DOE Joint Genome Institute"/>
            <person name="Lucas S."/>
            <person name="Copeland A."/>
            <person name="Lapidus A."/>
            <person name="Glavina del Rio T."/>
            <person name="Dalin E."/>
            <person name="Tice H."/>
            <person name="Pitluck S."/>
            <person name="Foster B."/>
            <person name="Larimer F."/>
            <person name="Land M."/>
            <person name="Hauser L."/>
            <person name="Kyrpides N."/>
            <person name="Mikhailova N."/>
            <person name="Bryant D.A."/>
            <person name="Richardson P."/>
        </authorList>
    </citation>
    <scope>NUCLEOTIDE SEQUENCE [LARGE SCALE GENOMIC DNA]</scope>
    <source>
        <strain>MD-66 / DSM 9485</strain>
    </source>
</reference>
<accession>B8G3Z1</accession>
<protein>
    <recommendedName>
        <fullName evidence="1">Polyribonucleotide nucleotidyltransferase</fullName>
        <ecNumber evidence="1">2.7.7.8</ecNumber>
    </recommendedName>
    <alternativeName>
        <fullName evidence="1">Polynucleotide phosphorylase</fullName>
        <shortName evidence="1">PNPase</shortName>
    </alternativeName>
</protein>
<proteinExistence type="inferred from homology"/>
<name>PNP_CHLAD</name>